<organism>
    <name type="scientific">Drosophila melanogaster</name>
    <name type="common">Fruit fly</name>
    <dbReference type="NCBI Taxonomy" id="7227"/>
    <lineage>
        <taxon>Eukaryota</taxon>
        <taxon>Metazoa</taxon>
        <taxon>Ecdysozoa</taxon>
        <taxon>Arthropoda</taxon>
        <taxon>Hexapoda</taxon>
        <taxon>Insecta</taxon>
        <taxon>Pterygota</taxon>
        <taxon>Neoptera</taxon>
        <taxon>Endopterygota</taxon>
        <taxon>Diptera</taxon>
        <taxon>Brachycera</taxon>
        <taxon>Muscomorpha</taxon>
        <taxon>Ephydroidea</taxon>
        <taxon>Drosophilidae</taxon>
        <taxon>Drosophila</taxon>
        <taxon>Sophophora</taxon>
    </lineage>
</organism>
<dbReference type="EMBL" id="AY302598">
    <property type="protein sequence ID" value="AAP76197.1"/>
    <property type="molecule type" value="mRNA"/>
</dbReference>
<dbReference type="EMBL" id="AE014296">
    <property type="protein sequence ID" value="AAF50356.5"/>
    <property type="molecule type" value="Genomic_DNA"/>
</dbReference>
<dbReference type="EMBL" id="AE014296">
    <property type="protein sequence ID" value="ABW08500.4"/>
    <property type="molecule type" value="Genomic_DNA"/>
</dbReference>
<dbReference type="RefSeq" id="NP_001097554.4">
    <molecule id="Q7Z020-5"/>
    <property type="nucleotide sequence ID" value="NM_001104084.5"/>
</dbReference>
<dbReference type="RefSeq" id="NP_648263.5">
    <molecule id="Q7Z020-4"/>
    <property type="nucleotide sequence ID" value="NM_140006.6"/>
</dbReference>
<dbReference type="PDB" id="7YKR">
    <property type="method" value="EM"/>
    <property type="resolution" value="3.20 A"/>
    <property type="chains" value="A/B/C/D=1-1197"/>
</dbReference>
<dbReference type="PDB" id="7YKS">
    <property type="method" value="EM"/>
    <property type="resolution" value="3.00 A"/>
    <property type="chains" value="A/B/C/D=1-1197"/>
</dbReference>
<dbReference type="PDBsum" id="7YKR"/>
<dbReference type="PDBsum" id="7YKS"/>
<dbReference type="EMDB" id="EMD-33895"/>
<dbReference type="EMDB" id="EMD-33896"/>
<dbReference type="SMR" id="Q7Z020"/>
<dbReference type="BioGRID" id="64420">
    <property type="interactions" value="23"/>
</dbReference>
<dbReference type="FunCoup" id="Q7Z020">
    <property type="interactions" value="3"/>
</dbReference>
<dbReference type="IntAct" id="Q7Z020">
    <property type="interactions" value="5"/>
</dbReference>
<dbReference type="STRING" id="7227.FBpp0304207"/>
<dbReference type="TCDB" id="1.A.4.6.2">
    <property type="family name" value="the transient receptor potential ca2+/cation channel (trp-cc) family"/>
</dbReference>
<dbReference type="GlyCosmos" id="Q7Z020">
    <property type="glycosylation" value="3 sites, No reported glycans"/>
</dbReference>
<dbReference type="GlyGen" id="Q7Z020">
    <property type="glycosylation" value="3 sites"/>
</dbReference>
<dbReference type="PaxDb" id="7227-FBpp0304207"/>
<dbReference type="EnsemblMetazoa" id="FBtr0331825">
    <molecule id="Q7Z020-4"/>
    <property type="protein sequence ID" value="FBpp0304209"/>
    <property type="gene ID" value="FBgn0035934"/>
</dbReference>
<dbReference type="EnsemblMetazoa" id="FBtr0331826">
    <molecule id="Q7Z020-5"/>
    <property type="protein sequence ID" value="FBpp0304210"/>
    <property type="gene ID" value="FBgn0035934"/>
</dbReference>
<dbReference type="GeneID" id="39015"/>
<dbReference type="KEGG" id="dme:Dmel_CG5751"/>
<dbReference type="AGR" id="FB:FBgn0035934"/>
<dbReference type="CTD" id="8989"/>
<dbReference type="FlyBase" id="FBgn0035934">
    <property type="gene designation" value="TrpA1"/>
</dbReference>
<dbReference type="VEuPathDB" id="VectorBase:FBgn0035934"/>
<dbReference type="eggNOG" id="KOG0510">
    <property type="taxonomic scope" value="Eukaryota"/>
</dbReference>
<dbReference type="eggNOG" id="KOG1326">
    <property type="taxonomic scope" value="Eukaryota"/>
</dbReference>
<dbReference type="GeneTree" id="ENSGT00940000156118"/>
<dbReference type="InParanoid" id="Q7Z020"/>
<dbReference type="OrthoDB" id="1661883at2759"/>
<dbReference type="Reactome" id="R-DME-3295583">
    <property type="pathway name" value="TRP channels"/>
</dbReference>
<dbReference type="BioGRID-ORCS" id="39015">
    <property type="hits" value="0 hits in 3 CRISPR screens"/>
</dbReference>
<dbReference type="GenomeRNAi" id="39015"/>
<dbReference type="PRO" id="PR:Q7Z020"/>
<dbReference type="Proteomes" id="UP000000803">
    <property type="component" value="Chromosome 3L"/>
</dbReference>
<dbReference type="Bgee" id="FBgn0035934">
    <property type="expression patterns" value="Expressed in adult anterior midgut class II enteroendocrine cell in adult midgut (Drosophila) and 18 other cell types or tissues"/>
</dbReference>
<dbReference type="ExpressionAtlas" id="Q7Z020">
    <property type="expression patterns" value="baseline and differential"/>
</dbReference>
<dbReference type="GO" id="GO:0034703">
    <property type="term" value="C:cation channel complex"/>
    <property type="evidence" value="ECO:0000314"/>
    <property type="project" value="FlyBase"/>
</dbReference>
<dbReference type="GO" id="GO:0016020">
    <property type="term" value="C:membrane"/>
    <property type="evidence" value="ECO:0000305"/>
    <property type="project" value="UniProtKB"/>
</dbReference>
<dbReference type="GO" id="GO:0005886">
    <property type="term" value="C:plasma membrane"/>
    <property type="evidence" value="ECO:0000314"/>
    <property type="project" value="FlyBase"/>
</dbReference>
<dbReference type="GO" id="GO:0005262">
    <property type="term" value="F:calcium channel activity"/>
    <property type="evidence" value="ECO:0000314"/>
    <property type="project" value="FlyBase"/>
</dbReference>
<dbReference type="GO" id="GO:0015276">
    <property type="term" value="F:ligand-gated monoatomic ion channel activity"/>
    <property type="evidence" value="ECO:0000314"/>
    <property type="project" value="FlyBase"/>
</dbReference>
<dbReference type="GO" id="GO:0005261">
    <property type="term" value="F:monoatomic cation channel activity"/>
    <property type="evidence" value="ECO:0000314"/>
    <property type="project" value="UniProtKB"/>
</dbReference>
<dbReference type="GO" id="GO:0097604">
    <property type="term" value="F:temperature-gated cation channel activity"/>
    <property type="evidence" value="ECO:0000314"/>
    <property type="project" value="FlyBase"/>
</dbReference>
<dbReference type="GO" id="GO:0006816">
    <property type="term" value="P:calcium ion transport"/>
    <property type="evidence" value="ECO:0000314"/>
    <property type="project" value="FlyBase"/>
</dbReference>
<dbReference type="GO" id="GO:0034605">
    <property type="term" value="P:cellular response to heat"/>
    <property type="evidence" value="ECO:0000314"/>
    <property type="project" value="FlyBase"/>
</dbReference>
<dbReference type="GO" id="GO:0097703">
    <property type="term" value="P:cellular response to pulsatile fluid shear stress"/>
    <property type="evidence" value="ECO:0000314"/>
    <property type="project" value="FlyBase"/>
</dbReference>
<dbReference type="GO" id="GO:0001580">
    <property type="term" value="P:detection of chemical stimulus involved in sensory perception of bitter taste"/>
    <property type="evidence" value="ECO:0000315"/>
    <property type="project" value="FlyBase"/>
</dbReference>
<dbReference type="GO" id="GO:0050968">
    <property type="term" value="P:detection of chemical stimulus involved in sensory perception of pain"/>
    <property type="evidence" value="ECO:0000315"/>
    <property type="project" value="FlyBase"/>
</dbReference>
<dbReference type="GO" id="GO:0120168">
    <property type="term" value="P:detection of hot stimulus involved in thermoception"/>
    <property type="evidence" value="ECO:0000314"/>
    <property type="project" value="FlyBase"/>
</dbReference>
<dbReference type="GO" id="GO:0050965">
    <property type="term" value="P:detection of temperature stimulus involved in sensory perception of pain"/>
    <property type="evidence" value="ECO:0000314"/>
    <property type="project" value="FlyBase"/>
</dbReference>
<dbReference type="GO" id="GO:0050960">
    <property type="term" value="P:detection of temperature stimulus involved in thermoception"/>
    <property type="evidence" value="ECO:0000314"/>
    <property type="project" value="FlyBase"/>
</dbReference>
<dbReference type="GO" id="GO:0007638">
    <property type="term" value="P:mechanosensory behavior"/>
    <property type="evidence" value="ECO:0000315"/>
    <property type="project" value="FlyBase"/>
</dbReference>
<dbReference type="GO" id="GO:0098655">
    <property type="term" value="P:monoatomic cation transmembrane transport"/>
    <property type="evidence" value="ECO:0000314"/>
    <property type="project" value="FlyBase"/>
</dbReference>
<dbReference type="GO" id="GO:0006812">
    <property type="term" value="P:monoatomic cation transport"/>
    <property type="evidence" value="ECO:0000314"/>
    <property type="project" value="UniProtKB"/>
</dbReference>
<dbReference type="GO" id="GO:0046957">
    <property type="term" value="P:negative phototaxis"/>
    <property type="evidence" value="ECO:0000315"/>
    <property type="project" value="FlyBase"/>
</dbReference>
<dbReference type="GO" id="GO:0023041">
    <property type="term" value="P:neuronal signal transduction"/>
    <property type="evidence" value="ECO:0000315"/>
    <property type="project" value="FlyBase"/>
</dbReference>
<dbReference type="GO" id="GO:0007602">
    <property type="term" value="P:phototransduction"/>
    <property type="evidence" value="ECO:0000314"/>
    <property type="project" value="FlyBase"/>
</dbReference>
<dbReference type="GO" id="GO:0050850">
    <property type="term" value="P:positive regulation of calcium-mediated signaling"/>
    <property type="evidence" value="ECO:0000315"/>
    <property type="project" value="FlyBase"/>
</dbReference>
<dbReference type="GO" id="GO:0009408">
    <property type="term" value="P:response to heat"/>
    <property type="evidence" value="ECO:0000314"/>
    <property type="project" value="UniProtKB"/>
</dbReference>
<dbReference type="GO" id="GO:0009416">
    <property type="term" value="P:response to light stimulus"/>
    <property type="evidence" value="ECO:0000315"/>
    <property type="project" value="FlyBase"/>
</dbReference>
<dbReference type="GO" id="GO:0010378">
    <property type="term" value="P:temperature compensation of the circadian clock"/>
    <property type="evidence" value="ECO:0000315"/>
    <property type="project" value="FlyBase"/>
</dbReference>
<dbReference type="GO" id="GO:0040040">
    <property type="term" value="P:thermosensory behavior"/>
    <property type="evidence" value="ECO:0000315"/>
    <property type="project" value="FlyBase"/>
</dbReference>
<dbReference type="GO" id="GO:0043052">
    <property type="term" value="P:thermotaxis"/>
    <property type="evidence" value="ECO:0000315"/>
    <property type="project" value="FlyBase"/>
</dbReference>
<dbReference type="FunFam" id="1.25.40.20:FF:000186">
    <property type="entry name" value="Transient receptor potential cation channel A1, isoform K"/>
    <property type="match status" value="1"/>
</dbReference>
<dbReference type="FunFam" id="1.25.40.20:FF:000285">
    <property type="entry name" value="Uncharacterized protein, isoform B"/>
    <property type="match status" value="1"/>
</dbReference>
<dbReference type="FunFam" id="1.25.40.20:FF:000286">
    <property type="entry name" value="Uncharacterized protein, isoform B"/>
    <property type="match status" value="1"/>
</dbReference>
<dbReference type="Gene3D" id="1.10.287.70">
    <property type="match status" value="1"/>
</dbReference>
<dbReference type="Gene3D" id="1.25.40.20">
    <property type="entry name" value="Ankyrin repeat-containing domain"/>
    <property type="match status" value="3"/>
</dbReference>
<dbReference type="InterPro" id="IPR002110">
    <property type="entry name" value="Ankyrin_rpt"/>
</dbReference>
<dbReference type="InterPro" id="IPR036770">
    <property type="entry name" value="Ankyrin_rpt-contain_sf"/>
</dbReference>
<dbReference type="InterPro" id="IPR005821">
    <property type="entry name" value="Ion_trans_dom"/>
</dbReference>
<dbReference type="InterPro" id="IPR052076">
    <property type="entry name" value="TRP_cation_channel"/>
</dbReference>
<dbReference type="PANTHER" id="PTHR47143:SF1">
    <property type="entry name" value="ION_TRANS DOMAIN-CONTAINING PROTEIN"/>
    <property type="match status" value="1"/>
</dbReference>
<dbReference type="PANTHER" id="PTHR47143">
    <property type="entry name" value="TRANSIENT RECEPTOR POTENTIAL CATION CHANNEL PROTEIN PAINLESS"/>
    <property type="match status" value="1"/>
</dbReference>
<dbReference type="Pfam" id="PF12796">
    <property type="entry name" value="Ank_2"/>
    <property type="match status" value="5"/>
</dbReference>
<dbReference type="Pfam" id="PF13637">
    <property type="entry name" value="Ank_4"/>
    <property type="match status" value="1"/>
</dbReference>
<dbReference type="Pfam" id="PF00520">
    <property type="entry name" value="Ion_trans"/>
    <property type="match status" value="1"/>
</dbReference>
<dbReference type="PRINTS" id="PR01415">
    <property type="entry name" value="ANKYRIN"/>
</dbReference>
<dbReference type="SMART" id="SM00248">
    <property type="entry name" value="ANK"/>
    <property type="match status" value="15"/>
</dbReference>
<dbReference type="SUPFAM" id="SSF48403">
    <property type="entry name" value="Ankyrin repeat"/>
    <property type="match status" value="3"/>
</dbReference>
<dbReference type="PROSITE" id="PS50297">
    <property type="entry name" value="ANK_REP_REGION"/>
    <property type="match status" value="1"/>
</dbReference>
<dbReference type="PROSITE" id="PS50088">
    <property type="entry name" value="ANK_REPEAT"/>
    <property type="match status" value="10"/>
</dbReference>
<reference key="1">
    <citation type="journal article" date="2003" name="Nature">
        <title>Ion channels: opposite thermosensor in fruitfly and mouse.</title>
        <authorList>
            <person name="Viswanath V."/>
            <person name="Story G.M."/>
            <person name="Peier A.M."/>
            <person name="Petrus M.J."/>
            <person name="Lee V.M."/>
            <person name="Hwang S.W."/>
            <person name="Patapoutian A."/>
            <person name="Jegla T."/>
        </authorList>
    </citation>
    <scope>NUCLEOTIDE SEQUENCE [MRNA] (ISOFORM I)</scope>
    <scope>FUNCTION</scope>
    <scope>SUBCELLULAR LOCATION</scope>
</reference>
<reference key="2">
    <citation type="journal article" date="2000" name="Science">
        <title>The genome sequence of Drosophila melanogaster.</title>
        <authorList>
            <person name="Adams M.D."/>
            <person name="Celniker S.E."/>
            <person name="Holt R.A."/>
            <person name="Evans C.A."/>
            <person name="Gocayne J.D."/>
            <person name="Amanatides P.G."/>
            <person name="Scherer S.E."/>
            <person name="Li P.W."/>
            <person name="Hoskins R.A."/>
            <person name="Galle R.F."/>
            <person name="George R.A."/>
            <person name="Lewis S.E."/>
            <person name="Richards S."/>
            <person name="Ashburner M."/>
            <person name="Henderson S.N."/>
            <person name="Sutton G.G."/>
            <person name="Wortman J.R."/>
            <person name="Yandell M.D."/>
            <person name="Zhang Q."/>
            <person name="Chen L.X."/>
            <person name="Brandon R.C."/>
            <person name="Rogers Y.-H.C."/>
            <person name="Blazej R.G."/>
            <person name="Champe M."/>
            <person name="Pfeiffer B.D."/>
            <person name="Wan K.H."/>
            <person name="Doyle C."/>
            <person name="Baxter E.G."/>
            <person name="Helt G."/>
            <person name="Nelson C.R."/>
            <person name="Miklos G.L.G."/>
            <person name="Abril J.F."/>
            <person name="Agbayani A."/>
            <person name="An H.-J."/>
            <person name="Andrews-Pfannkoch C."/>
            <person name="Baldwin D."/>
            <person name="Ballew R.M."/>
            <person name="Basu A."/>
            <person name="Baxendale J."/>
            <person name="Bayraktaroglu L."/>
            <person name="Beasley E.M."/>
            <person name="Beeson K.Y."/>
            <person name="Benos P.V."/>
            <person name="Berman B.P."/>
            <person name="Bhandari D."/>
            <person name="Bolshakov S."/>
            <person name="Borkova D."/>
            <person name="Botchan M.R."/>
            <person name="Bouck J."/>
            <person name="Brokstein P."/>
            <person name="Brottier P."/>
            <person name="Burtis K.C."/>
            <person name="Busam D.A."/>
            <person name="Butler H."/>
            <person name="Cadieu E."/>
            <person name="Center A."/>
            <person name="Chandra I."/>
            <person name="Cherry J.M."/>
            <person name="Cawley S."/>
            <person name="Dahlke C."/>
            <person name="Davenport L.B."/>
            <person name="Davies P."/>
            <person name="de Pablos B."/>
            <person name="Delcher A."/>
            <person name="Deng Z."/>
            <person name="Mays A.D."/>
            <person name="Dew I."/>
            <person name="Dietz S.M."/>
            <person name="Dodson K."/>
            <person name="Doup L.E."/>
            <person name="Downes M."/>
            <person name="Dugan-Rocha S."/>
            <person name="Dunkov B.C."/>
            <person name="Dunn P."/>
            <person name="Durbin K.J."/>
            <person name="Evangelista C.C."/>
            <person name="Ferraz C."/>
            <person name="Ferriera S."/>
            <person name="Fleischmann W."/>
            <person name="Fosler C."/>
            <person name="Gabrielian A.E."/>
            <person name="Garg N.S."/>
            <person name="Gelbart W.M."/>
            <person name="Glasser K."/>
            <person name="Glodek A."/>
            <person name="Gong F."/>
            <person name="Gorrell J.H."/>
            <person name="Gu Z."/>
            <person name="Guan P."/>
            <person name="Harris M."/>
            <person name="Harris N.L."/>
            <person name="Harvey D.A."/>
            <person name="Heiman T.J."/>
            <person name="Hernandez J.R."/>
            <person name="Houck J."/>
            <person name="Hostin D."/>
            <person name="Houston K.A."/>
            <person name="Howland T.J."/>
            <person name="Wei M.-H."/>
            <person name="Ibegwam C."/>
            <person name="Jalali M."/>
            <person name="Kalush F."/>
            <person name="Karpen G.H."/>
            <person name="Ke Z."/>
            <person name="Kennison J.A."/>
            <person name="Ketchum K.A."/>
            <person name="Kimmel B.E."/>
            <person name="Kodira C.D."/>
            <person name="Kraft C.L."/>
            <person name="Kravitz S."/>
            <person name="Kulp D."/>
            <person name="Lai Z."/>
            <person name="Lasko P."/>
            <person name="Lei Y."/>
            <person name="Levitsky A.A."/>
            <person name="Li J.H."/>
            <person name="Li Z."/>
            <person name="Liang Y."/>
            <person name="Lin X."/>
            <person name="Liu X."/>
            <person name="Mattei B."/>
            <person name="McIntosh T.C."/>
            <person name="McLeod M.P."/>
            <person name="McPherson D."/>
            <person name="Merkulov G."/>
            <person name="Milshina N.V."/>
            <person name="Mobarry C."/>
            <person name="Morris J."/>
            <person name="Moshrefi A."/>
            <person name="Mount S.M."/>
            <person name="Moy M."/>
            <person name="Murphy B."/>
            <person name="Murphy L."/>
            <person name="Muzny D.M."/>
            <person name="Nelson D.L."/>
            <person name="Nelson D.R."/>
            <person name="Nelson K.A."/>
            <person name="Nixon K."/>
            <person name="Nusskern D.R."/>
            <person name="Pacleb J.M."/>
            <person name="Palazzolo M."/>
            <person name="Pittman G.S."/>
            <person name="Pan S."/>
            <person name="Pollard J."/>
            <person name="Puri V."/>
            <person name="Reese M.G."/>
            <person name="Reinert K."/>
            <person name="Remington K."/>
            <person name="Saunders R.D.C."/>
            <person name="Scheeler F."/>
            <person name="Shen H."/>
            <person name="Shue B.C."/>
            <person name="Siden-Kiamos I."/>
            <person name="Simpson M."/>
            <person name="Skupski M.P."/>
            <person name="Smith T.J."/>
            <person name="Spier E."/>
            <person name="Spradling A.C."/>
            <person name="Stapleton M."/>
            <person name="Strong R."/>
            <person name="Sun E."/>
            <person name="Svirskas R."/>
            <person name="Tector C."/>
            <person name="Turner R."/>
            <person name="Venter E."/>
            <person name="Wang A.H."/>
            <person name="Wang X."/>
            <person name="Wang Z.-Y."/>
            <person name="Wassarman D.A."/>
            <person name="Weinstock G.M."/>
            <person name="Weissenbach J."/>
            <person name="Williams S.M."/>
            <person name="Woodage T."/>
            <person name="Worley K.C."/>
            <person name="Wu D."/>
            <person name="Yang S."/>
            <person name="Yao Q.A."/>
            <person name="Ye J."/>
            <person name="Yeh R.-F."/>
            <person name="Zaveri J.S."/>
            <person name="Zhan M."/>
            <person name="Zhang G."/>
            <person name="Zhao Q."/>
            <person name="Zheng L."/>
            <person name="Zheng X.H."/>
            <person name="Zhong F.N."/>
            <person name="Zhong W."/>
            <person name="Zhou X."/>
            <person name="Zhu S.C."/>
            <person name="Zhu X."/>
            <person name="Smith H.O."/>
            <person name="Gibbs R.A."/>
            <person name="Myers E.W."/>
            <person name="Rubin G.M."/>
            <person name="Venter J.C."/>
        </authorList>
    </citation>
    <scope>NUCLEOTIDE SEQUENCE [LARGE SCALE GENOMIC DNA]</scope>
    <source>
        <strain>Berkeley</strain>
    </source>
</reference>
<reference key="3">
    <citation type="journal article" date="2002" name="Genome Biol.">
        <title>Annotation of the Drosophila melanogaster euchromatic genome: a systematic review.</title>
        <authorList>
            <person name="Misra S."/>
            <person name="Crosby M.A."/>
            <person name="Mungall C.J."/>
            <person name="Matthews B.B."/>
            <person name="Campbell K.S."/>
            <person name="Hradecky P."/>
            <person name="Huang Y."/>
            <person name="Kaminker J.S."/>
            <person name="Millburn G.H."/>
            <person name="Prochnik S.E."/>
            <person name="Smith C.D."/>
            <person name="Tupy J.L."/>
            <person name="Whitfield E.J."/>
            <person name="Bayraktaroglu L."/>
            <person name="Berman B.P."/>
            <person name="Bettencourt B.R."/>
            <person name="Celniker S.E."/>
            <person name="de Grey A.D.N.J."/>
            <person name="Drysdale R.A."/>
            <person name="Harris N.L."/>
            <person name="Richter J."/>
            <person name="Russo S."/>
            <person name="Schroeder A.J."/>
            <person name="Shu S.Q."/>
            <person name="Stapleton M."/>
            <person name="Yamada C."/>
            <person name="Ashburner M."/>
            <person name="Gelbart W.M."/>
            <person name="Rubin G.M."/>
            <person name="Lewis S.E."/>
        </authorList>
    </citation>
    <scope>GENOME REANNOTATION</scope>
    <scope>ALTERNATIVE SPLICING</scope>
    <source>
        <strain>Berkeley</strain>
    </source>
</reference>
<reference key="4">
    <citation type="journal article" date="2005" name="Genes Dev.">
        <title>The Drosophila ortholog of vertebrate TRPA1 regulates thermotaxis.</title>
        <authorList>
            <person name="Rosenzweig M."/>
            <person name="Brennan K.M."/>
            <person name="Tayler T.D."/>
            <person name="Phelps P.O."/>
            <person name="Patapoutian A."/>
            <person name="Garrity P.A."/>
        </authorList>
    </citation>
    <scope>FUNCTION</scope>
    <scope>DISRUPTION PHENOTYPE</scope>
</reference>
<accession>Q7Z020</accession>
<accession>A8JNP0</accession>
<accession>Q9VSQ9</accession>
<feature type="chain" id="PRO_0000215373" description="Transient receptor potential cation channel subfamily A member 1">
    <location>
        <begin position="1"/>
        <end position="1197"/>
    </location>
</feature>
<feature type="topological domain" description="Cytoplasmic" evidence="2">
    <location>
        <begin position="1"/>
        <end position="753"/>
    </location>
</feature>
<feature type="transmembrane region" description="Helical; Name=1" evidence="2">
    <location>
        <begin position="754"/>
        <end position="774"/>
    </location>
</feature>
<feature type="topological domain" description="Extracellular" evidence="2">
    <location>
        <begin position="775"/>
        <end position="827"/>
    </location>
</feature>
<feature type="transmembrane region" description="Helical; Name=2" evidence="2">
    <location>
        <begin position="828"/>
        <end position="848"/>
    </location>
</feature>
<feature type="topological domain" description="Cytoplasmic" evidence="2">
    <location>
        <begin position="849"/>
        <end position="856"/>
    </location>
</feature>
<feature type="transmembrane region" description="Helical; Name=3" evidence="2">
    <location>
        <begin position="857"/>
        <end position="877"/>
    </location>
</feature>
<feature type="topological domain" description="Extracellular" evidence="2">
    <location>
        <begin position="878"/>
        <end position="889"/>
    </location>
</feature>
<feature type="transmembrane region" description="Helical; Name=4" evidence="2">
    <location>
        <begin position="890"/>
        <end position="910"/>
    </location>
</feature>
<feature type="topological domain" description="Cytoplasmic" evidence="2">
    <location>
        <begin position="911"/>
        <end position="932"/>
    </location>
</feature>
<feature type="transmembrane region" description="Helical; Name=5" evidence="2">
    <location>
        <begin position="933"/>
        <end position="953"/>
    </location>
</feature>
<feature type="topological domain" description="Extracellular" evidence="2">
    <location>
        <begin position="954"/>
        <end position="968"/>
    </location>
</feature>
<feature type="intramembrane region" description="Pore-forming" evidence="1">
    <location>
        <begin position="969"/>
        <end position="989"/>
    </location>
</feature>
<feature type="topological domain" description="Extracellular" evidence="2">
    <location>
        <begin position="990"/>
        <end position="1004"/>
    </location>
</feature>
<feature type="transmembrane region" description="Helical; Name=6" evidence="2">
    <location>
        <begin position="1005"/>
        <end position="1025"/>
    </location>
</feature>
<feature type="topological domain" description="Cytoplasmic" evidence="2">
    <location>
        <begin position="1026"/>
        <end position="1197"/>
    </location>
</feature>
<feature type="repeat" description="ANK 1">
    <location>
        <begin position="89"/>
        <end position="118"/>
    </location>
</feature>
<feature type="repeat" description="ANK 2">
    <location>
        <begin position="122"/>
        <end position="151"/>
    </location>
</feature>
<feature type="repeat" description="ANK 3">
    <location>
        <begin position="155"/>
        <end position="184"/>
    </location>
</feature>
<feature type="repeat" description="ANK 4">
    <location>
        <begin position="190"/>
        <end position="219"/>
    </location>
</feature>
<feature type="repeat" description="ANK 5">
    <location>
        <begin position="224"/>
        <end position="253"/>
    </location>
</feature>
<feature type="repeat" description="ANK 6">
    <location>
        <begin position="265"/>
        <end position="294"/>
    </location>
</feature>
<feature type="repeat" description="ANK 7">
    <location>
        <begin position="298"/>
        <end position="327"/>
    </location>
</feature>
<feature type="repeat" description="ANK 8">
    <location>
        <begin position="336"/>
        <end position="365"/>
    </location>
</feature>
<feature type="repeat" description="ANK 9">
    <location>
        <begin position="369"/>
        <end position="398"/>
    </location>
</feature>
<feature type="repeat" description="ANK 10">
    <location>
        <begin position="443"/>
        <end position="472"/>
    </location>
</feature>
<feature type="repeat" description="ANK 11">
    <location>
        <begin position="476"/>
        <end position="505"/>
    </location>
</feature>
<feature type="repeat" description="ANK 12">
    <location>
        <begin position="512"/>
        <end position="541"/>
    </location>
</feature>
<feature type="repeat" description="ANK 13">
    <location>
        <begin position="544"/>
        <end position="574"/>
    </location>
</feature>
<feature type="repeat" description="ANK 14">
    <location>
        <begin position="578"/>
        <end position="607"/>
    </location>
</feature>
<feature type="glycosylation site" description="N-linked (GlcNAc...) asparagine" evidence="2">
    <location>
        <position position="785"/>
    </location>
</feature>
<feature type="glycosylation site" description="N-linked (GlcNAc...) asparagine" evidence="2">
    <location>
        <position position="802"/>
    </location>
</feature>
<feature type="glycosylation site" description="N-linked (GlcNAc...) asparagine" evidence="2">
    <location>
        <position position="823"/>
    </location>
</feature>
<feature type="splice variant" id="VSP_030263" description="In isoform J." evidence="5">
    <original>AFLQCPFMFAKIDEKTGESITTASPIPLPAL</original>
    <variation>WPYQKTPEQIEAKRKEFNDPKWRPAPLAVV</variation>
    <location>
        <begin position="690"/>
        <end position="720"/>
    </location>
</feature>
<feature type="helix" evidence="6">
    <location>
        <begin position="59"/>
        <end position="64"/>
    </location>
</feature>
<feature type="turn" evidence="6">
    <location>
        <begin position="65"/>
        <end position="67"/>
    </location>
</feature>
<feature type="strand" evidence="6">
    <location>
        <begin position="69"/>
        <end position="71"/>
    </location>
</feature>
<feature type="helix" evidence="6">
    <location>
        <begin position="72"/>
        <end position="82"/>
    </location>
</feature>
<feature type="turn" evidence="6">
    <location>
        <begin position="95"/>
        <end position="97"/>
    </location>
</feature>
<feature type="helix" evidence="6">
    <location>
        <begin position="98"/>
        <end position="100"/>
    </location>
</feature>
<feature type="helix" evidence="6">
    <location>
        <begin position="103"/>
        <end position="111"/>
    </location>
</feature>
<feature type="helix" evidence="6">
    <location>
        <begin position="126"/>
        <end position="132"/>
    </location>
</feature>
<feature type="helix" evidence="6">
    <location>
        <begin position="138"/>
        <end position="144"/>
    </location>
</feature>
<feature type="helix" evidence="6">
    <location>
        <begin position="160"/>
        <end position="163"/>
    </location>
</feature>
<feature type="turn" evidence="6">
    <location>
        <begin position="164"/>
        <end position="167"/>
    </location>
</feature>
<feature type="helix" evidence="6">
    <location>
        <begin position="169"/>
        <end position="176"/>
    </location>
</feature>
<feature type="strand" evidence="6">
    <location>
        <begin position="180"/>
        <end position="182"/>
    </location>
</feature>
<feature type="strand" evidence="6">
    <location>
        <begin position="189"/>
        <end position="191"/>
    </location>
</feature>
<feature type="turn" evidence="6">
    <location>
        <begin position="194"/>
        <end position="196"/>
    </location>
</feature>
<feature type="helix" evidence="6">
    <location>
        <begin position="197"/>
        <end position="200"/>
    </location>
</feature>
<feature type="helix" evidence="6">
    <location>
        <begin position="204"/>
        <end position="212"/>
    </location>
</feature>
<feature type="helix" evidence="6">
    <location>
        <begin position="228"/>
        <end position="234"/>
    </location>
</feature>
<feature type="helix" evidence="6">
    <location>
        <begin position="240"/>
        <end position="245"/>
    </location>
</feature>
<feature type="turn" evidence="6">
    <location>
        <begin position="249"/>
        <end position="252"/>
    </location>
</feature>
<feature type="helix" evidence="6">
    <location>
        <begin position="255"/>
        <end position="258"/>
    </location>
</feature>
<feature type="turn" evidence="6">
    <location>
        <begin position="269"/>
        <end position="277"/>
    </location>
</feature>
<feature type="helix" evidence="6">
    <location>
        <begin position="279"/>
        <end position="287"/>
    </location>
</feature>
<feature type="helix" evidence="6">
    <location>
        <begin position="302"/>
        <end position="305"/>
    </location>
</feature>
<feature type="helix" evidence="6">
    <location>
        <begin position="312"/>
        <end position="321"/>
    </location>
</feature>
<feature type="helix" evidence="6">
    <location>
        <begin position="325"/>
        <end position="328"/>
    </location>
</feature>
<feature type="strand" evidence="6">
    <location>
        <begin position="329"/>
        <end position="331"/>
    </location>
</feature>
<feature type="helix" evidence="6">
    <location>
        <begin position="340"/>
        <end position="346"/>
    </location>
</feature>
<feature type="helix" evidence="6">
    <location>
        <begin position="352"/>
        <end position="358"/>
    </location>
</feature>
<feature type="helix" evidence="6">
    <location>
        <begin position="373"/>
        <end position="379"/>
    </location>
</feature>
<feature type="helix" evidence="6">
    <location>
        <begin position="384"/>
        <end position="390"/>
    </location>
</feature>
<feature type="turn" evidence="6">
    <location>
        <begin position="391"/>
        <end position="393"/>
    </location>
</feature>
<feature type="helix" evidence="6">
    <location>
        <begin position="406"/>
        <end position="411"/>
    </location>
</feature>
<feature type="turn" evidence="6">
    <location>
        <begin position="412"/>
        <end position="414"/>
    </location>
</feature>
<feature type="helix" evidence="6">
    <location>
        <begin position="418"/>
        <end position="426"/>
    </location>
</feature>
<feature type="helix" evidence="6">
    <location>
        <begin position="429"/>
        <end position="432"/>
    </location>
</feature>
<feature type="helix" evidence="6">
    <location>
        <begin position="447"/>
        <end position="453"/>
    </location>
</feature>
<feature type="helix" evidence="6">
    <location>
        <begin position="457"/>
        <end position="465"/>
    </location>
</feature>
<feature type="helix" evidence="7">
    <location>
        <begin position="480"/>
        <end position="486"/>
    </location>
</feature>
<feature type="helix" evidence="7">
    <location>
        <begin position="490"/>
        <end position="496"/>
    </location>
</feature>
<feature type="strand" evidence="7">
    <location>
        <begin position="499"/>
        <end position="501"/>
    </location>
</feature>
<feature type="strand" evidence="6">
    <location>
        <begin position="503"/>
        <end position="507"/>
    </location>
</feature>
<feature type="strand" evidence="6">
    <location>
        <begin position="511"/>
        <end position="513"/>
    </location>
</feature>
<feature type="helix" evidence="7">
    <location>
        <begin position="516"/>
        <end position="522"/>
    </location>
</feature>
<feature type="turn" evidence="7">
    <location>
        <begin position="526"/>
        <end position="528"/>
    </location>
</feature>
<feature type="helix" evidence="7">
    <location>
        <begin position="529"/>
        <end position="534"/>
    </location>
</feature>
<feature type="strand" evidence="6">
    <location>
        <begin position="543"/>
        <end position="545"/>
    </location>
</feature>
<feature type="helix" evidence="7">
    <location>
        <begin position="548"/>
        <end position="555"/>
    </location>
</feature>
<feature type="helix" evidence="7">
    <location>
        <begin position="561"/>
        <end position="567"/>
    </location>
</feature>
<feature type="helix" evidence="6">
    <location>
        <begin position="570"/>
        <end position="572"/>
    </location>
</feature>
<feature type="helix" evidence="7">
    <location>
        <begin position="582"/>
        <end position="587"/>
    </location>
</feature>
<feature type="turn" evidence="7">
    <location>
        <begin position="588"/>
        <end position="590"/>
    </location>
</feature>
<feature type="helix" evidence="7">
    <location>
        <begin position="592"/>
        <end position="598"/>
    </location>
</feature>
<feature type="turn" evidence="7">
    <location>
        <begin position="599"/>
        <end position="601"/>
    </location>
</feature>
<feature type="strand" evidence="6">
    <location>
        <begin position="609"/>
        <end position="611"/>
    </location>
</feature>
<feature type="helix" evidence="7">
    <location>
        <begin position="614"/>
        <end position="620"/>
    </location>
</feature>
<feature type="helix" evidence="7">
    <location>
        <begin position="624"/>
        <end position="631"/>
    </location>
</feature>
<feature type="strand" evidence="7">
    <location>
        <begin position="634"/>
        <end position="636"/>
    </location>
</feature>
<feature type="helix" evidence="7">
    <location>
        <begin position="637"/>
        <end position="641"/>
    </location>
</feature>
<feature type="helix" evidence="7">
    <location>
        <begin position="651"/>
        <end position="658"/>
    </location>
</feature>
<feature type="helix" evidence="7">
    <location>
        <begin position="660"/>
        <end position="668"/>
    </location>
</feature>
<feature type="strand" evidence="7">
    <location>
        <begin position="671"/>
        <end position="673"/>
    </location>
</feature>
<feature type="turn" evidence="6">
    <location>
        <begin position="677"/>
        <end position="679"/>
    </location>
</feature>
<feature type="strand" evidence="7">
    <location>
        <begin position="685"/>
        <end position="687"/>
    </location>
</feature>
<feature type="strand" evidence="7">
    <location>
        <begin position="690"/>
        <end position="693"/>
    </location>
</feature>
<feature type="helix" evidence="7">
    <location>
        <begin position="718"/>
        <end position="725"/>
    </location>
</feature>
<feature type="helix" evidence="7">
    <location>
        <begin position="729"/>
        <end position="732"/>
    </location>
</feature>
<feature type="helix" evidence="7">
    <location>
        <begin position="735"/>
        <end position="745"/>
    </location>
</feature>
<feature type="turn" evidence="7">
    <location>
        <begin position="746"/>
        <end position="750"/>
    </location>
</feature>
<feature type="helix" evidence="7">
    <location>
        <begin position="751"/>
        <end position="776"/>
    </location>
</feature>
<feature type="helix" evidence="7">
    <location>
        <begin position="826"/>
        <end position="843"/>
    </location>
</feature>
<feature type="turn" evidence="7">
    <location>
        <begin position="844"/>
        <end position="847"/>
    </location>
</feature>
<feature type="helix" evidence="7">
    <location>
        <begin position="848"/>
        <end position="852"/>
    </location>
</feature>
<feature type="turn" evidence="7">
    <location>
        <begin position="853"/>
        <end position="856"/>
    </location>
</feature>
<feature type="strand" evidence="7">
    <location>
        <begin position="860"/>
        <end position="862"/>
    </location>
</feature>
<feature type="helix" evidence="7">
    <location>
        <begin position="863"/>
        <end position="875"/>
    </location>
</feature>
<feature type="helix" evidence="7">
    <location>
        <begin position="878"/>
        <end position="880"/>
    </location>
</feature>
<feature type="strand" evidence="7">
    <location>
        <begin position="882"/>
        <end position="884"/>
    </location>
</feature>
<feature type="helix" evidence="7">
    <location>
        <begin position="889"/>
        <end position="904"/>
    </location>
</feature>
<feature type="turn" evidence="7">
    <location>
        <begin position="905"/>
        <end position="909"/>
    </location>
</feature>
<feature type="helix" evidence="7">
    <location>
        <begin position="910"/>
        <end position="912"/>
    </location>
</feature>
<feature type="strand" evidence="7">
    <location>
        <begin position="913"/>
        <end position="917"/>
    </location>
</feature>
<feature type="helix" evidence="7">
    <location>
        <begin position="918"/>
        <end position="933"/>
    </location>
</feature>
<feature type="turn" evidence="7">
    <location>
        <begin position="934"/>
        <end position="938"/>
    </location>
</feature>
<feature type="helix" evidence="7">
    <location>
        <begin position="939"/>
        <end position="952"/>
    </location>
</feature>
<feature type="helix" evidence="7">
    <location>
        <begin position="962"/>
        <end position="965"/>
    </location>
</feature>
<feature type="helix" evidence="7">
    <location>
        <begin position="968"/>
        <end position="977"/>
    </location>
</feature>
<feature type="turn" evidence="7">
    <location>
        <begin position="978"/>
        <end position="981"/>
    </location>
</feature>
<feature type="helix" evidence="7">
    <location>
        <begin position="985"/>
        <end position="988"/>
    </location>
</feature>
<feature type="helix" evidence="7">
    <location>
        <begin position="990"/>
        <end position="994"/>
    </location>
</feature>
<feature type="helix" evidence="7">
    <location>
        <begin position="1001"/>
        <end position="1014"/>
    </location>
</feature>
<feature type="turn" evidence="7">
    <location>
        <begin position="1015"/>
        <end position="1017"/>
    </location>
</feature>
<feature type="helix" evidence="7">
    <location>
        <begin position="1018"/>
        <end position="1034"/>
    </location>
</feature>
<feature type="turn" evidence="7">
    <location>
        <begin position="1035"/>
        <end position="1037"/>
    </location>
</feature>
<feature type="helix" evidence="7">
    <location>
        <begin position="1038"/>
        <end position="1054"/>
    </location>
</feature>
<feature type="helix" evidence="7">
    <location>
        <begin position="1059"/>
        <end position="1065"/>
    </location>
</feature>
<feature type="strand" evidence="7">
    <location>
        <begin position="1069"/>
        <end position="1072"/>
    </location>
</feature>
<feature type="helix" evidence="6">
    <location>
        <begin position="1083"/>
        <end position="1088"/>
    </location>
</feature>
<feature type="helix" evidence="7">
    <location>
        <begin position="1111"/>
        <end position="1114"/>
    </location>
</feature>
<feature type="turn" evidence="7">
    <location>
        <begin position="1115"/>
        <end position="1117"/>
    </location>
</feature>
<feature type="helix" evidence="7">
    <location>
        <begin position="1118"/>
        <end position="1145"/>
    </location>
</feature>
<feature type="helix" evidence="6">
    <location>
        <begin position="1152"/>
        <end position="1154"/>
    </location>
</feature>
<comment type="function">
    <text evidence="3 4">Essential for thermotaxis by sensing environmental temperature. Receptor-activated non-selective cation channel involved in detection of sensations such as temperature. Involved in heat nociception by being activated by warm temperature of about 24-29 degrees Celsius.</text>
</comment>
<comment type="subunit">
    <text evidence="1">Homotetramer.</text>
</comment>
<comment type="subcellular location">
    <subcellularLocation>
        <location evidence="3">Cell membrane</location>
        <topology evidence="5">Multi-pass membrane protein</topology>
    </subcellularLocation>
</comment>
<comment type="alternative products">
    <event type="alternative splicing"/>
    <isoform>
        <id>Q7Z020-4</id>
        <name>I</name>
        <sequence type="displayed"/>
    </isoform>
    <isoform>
        <id>Q7Z020-5</id>
        <name>J</name>
        <sequence type="described" ref="VSP_030263"/>
    </isoform>
</comment>
<comment type="disruption phenotype">
    <text evidence="4">Eliminates avoidance of elevated temperatures along a thermal gradient.</text>
</comment>
<comment type="similarity">
    <text evidence="5">Belongs to the transient receptor (TC 1.A.4) family.</text>
</comment>
<comment type="online information" name="Protein Spotlight">
    <link uri="https://www.proteinspotlight.org/back_issues/082"/>
    <text>The power behind pain - Issue 82 of May 2007</text>
</comment>
<protein>
    <recommendedName>
        <fullName>Transient receptor potential cation channel subfamily A member 1</fullName>
        <shortName>dTRPA1</shortName>
    </recommendedName>
    <alternativeName>
        <fullName>Ankyrin-like with transmembrane domains protein 1</fullName>
        <shortName>dANKTM1</shortName>
    </alternativeName>
</protein>
<evidence type="ECO:0000250" key="1">
    <source>
        <dbReference type="UniProtKB" id="O75762"/>
    </source>
</evidence>
<evidence type="ECO:0000255" key="2"/>
<evidence type="ECO:0000269" key="3">
    <source>
    </source>
</evidence>
<evidence type="ECO:0000269" key="4">
    <source>
    </source>
</evidence>
<evidence type="ECO:0000305" key="5"/>
<evidence type="ECO:0007829" key="6">
    <source>
        <dbReference type="PDB" id="7YKR"/>
    </source>
</evidence>
<evidence type="ECO:0007829" key="7">
    <source>
        <dbReference type="PDB" id="7YKS"/>
    </source>
</evidence>
<proteinExistence type="evidence at protein level"/>
<gene>
    <name type="primary">TrpA1</name>
    <name type="synonym">Anktm1</name>
    <name type="ORF">CG5751</name>
</gene>
<sequence>MTSGDKETPKREDFASALRFLMGGCAREPEMTAMAPLNLPKKWARILRMSSTPKIPIVDYLEAAESGNLDDFKRLFMADNSRIALKDAKGRTAAHQAAARNRVNILRYIRDQNGDFNAKDNAGNTPLHIAVESDAYDALDYLLSIPVDTGVLNEKKQAPVHLATELNKVKSLRVMGQYRNVIDIQQGGEHGRTALHLAAIYDHEECARILITEFDACPRKPCNNGYYPIHEAAKNASSKTMEVFFQWGEQRGCTREEMISFYDSEGNVPLHSAVHGGDIKAVELCLKSGAKISTQQHDLSTPVHLACAQGAIDIVKLMFEMQPMEKRLCLSCTDVQKMTPLHCASMFDHPDIVSYLVAEGADINALDKEHRSPLLLAASRSGWKTVHLLIRLGACISVKDAAARNVLHFVIMNGGRLTDFAEQVANCQTQAQLKLLLNEKDSMGCSPLHYASRDGHIRSLENLIRLGACINLKNNNNESPLHFAARYGRYNTVRQLLDSEKGSFIINESDGAGMTPLHISSQQGHTRVVQLLLNRGALLHRDHTGRNPLQLAAMSGYTETIELLHSVHSHLLDQVDKDGNTALHLATMENKPHAISVLMSMGCKLVYNVLDMSAIDYAIYYKYPEAALAMVTHEERANEVMALRSDKHPCVTLALIASMPKVFEAVQDKCITKANCKKDSKSFYIKYSFAFLQCPFMFAKIDEKTGESITTASPIPLPALNTMVTHGRVELLAHPLSQKYLQMKWNSYGKYFHLANLLIYSIFLVFVTIYSSLMMNNIELKAGDNKTMSQYCNMGWEQLTMNLSQNPSVASQIRLDSCEERINRTTAILFCAVVIVVYILLNSMRELIQIYQQKLHYILETVNLISWVLYISALVMVTPAFQPDGGINTIHYSAASIAVFLSWFRLLLFLQRFDQVGIYVVMFLEILQTLIKVLMVFSILIIAFGLAFYILLSKIIDPQPNHLSFSNIPMSLLRTFSMMLGELDFVGTYVNTYYRDQLKVPMTSFLILSVFMILMPILLMNLLIGLAVGDIESVRRNAQLKRLAMQVVLHTELERKLPHVWLQRVDKMELIEYPNETKCKLGFCDFILRKWFSNPFTEDSSMDVISFDNNDDYINAELERQRRKLRDISRMLEQQHHLVRLIVQKMEIKTEADDVDEGISPNELRSVVGLRSAGGNRWNSPRVRNKLRAALSFNKSM</sequence>
<name>TRPA1_DROME</name>
<keyword id="KW-0002">3D-structure</keyword>
<keyword id="KW-0025">Alternative splicing</keyword>
<keyword id="KW-0040">ANK repeat</keyword>
<keyword id="KW-1003">Cell membrane</keyword>
<keyword id="KW-0325">Glycoprotein</keyword>
<keyword id="KW-0407">Ion channel</keyword>
<keyword id="KW-0406">Ion transport</keyword>
<keyword id="KW-0472">Membrane</keyword>
<keyword id="KW-1185">Reference proteome</keyword>
<keyword id="KW-0677">Repeat</keyword>
<keyword id="KW-0716">Sensory transduction</keyword>
<keyword id="KW-0812">Transmembrane</keyword>
<keyword id="KW-1133">Transmembrane helix</keyword>
<keyword id="KW-0813">Transport</keyword>